<geneLocation type="chloroplast"/>
<reference key="1">
    <citation type="journal article" date="1986" name="Nature">
        <title>Chloroplast gene organization deduced from complete sequence of liverwort Marchantia polymorpha chloroplast DNA.</title>
        <authorList>
            <person name="Ohyama K."/>
            <person name="Fukuzawa H."/>
            <person name="Kohchi T."/>
            <person name="Shirai H."/>
            <person name="Sano T."/>
            <person name="Sano S."/>
            <person name="Umesono K."/>
            <person name="Shiki Y."/>
            <person name="Takeuchi M."/>
            <person name="Chang Z."/>
            <person name="Aota S."/>
            <person name="Inokuchi H."/>
            <person name="Ozeki H."/>
        </authorList>
    </citation>
    <scope>NUCLEOTIDE SEQUENCE [LARGE SCALE GENOMIC DNA]</scope>
</reference>
<reference key="2">
    <citation type="journal article" date="1988" name="J. Mol. Biol.">
        <title>Structure and organization of Marchantia polymorpha chloroplast genome. IV. Inverted repeat and small single copy regions.</title>
        <authorList>
            <person name="Kohchi T."/>
            <person name="Shirai H."/>
            <person name="Fukuzawa H."/>
            <person name="Sano T."/>
            <person name="Komano T."/>
            <person name="Umesono K."/>
            <person name="Inokuchi H."/>
            <person name="Ozeki H."/>
            <person name="Ohyama K."/>
        </authorList>
    </citation>
    <scope>NUCLEOTIDE SEQUENCE [GENOMIC DNA]</scope>
</reference>
<keyword id="KW-0150">Chloroplast</keyword>
<keyword id="KW-0934">Plastid</keyword>
<keyword id="KW-0653">Protein transport</keyword>
<keyword id="KW-0813">Transport</keyword>
<feature type="chain" id="PRO_0000217301" description="Putative protein TIC 214 C-terminal part">
    <location>
        <begin position="1"/>
        <end position="464"/>
    </location>
</feature>
<dbReference type="EMBL" id="X04465">
    <property type="protein sequence ID" value="CAA28142.1"/>
    <property type="molecule type" value="Genomic_DNA"/>
</dbReference>
<dbReference type="PIR" id="S01520">
    <property type="entry name" value="A05026"/>
</dbReference>
<dbReference type="RefSeq" id="NP_039356.1">
    <property type="nucleotide sequence ID" value="NC_001319.1"/>
</dbReference>
<dbReference type="GO" id="GO:0009507">
    <property type="term" value="C:chloroplast"/>
    <property type="evidence" value="ECO:0007669"/>
    <property type="project" value="UniProtKB-SubCell"/>
</dbReference>
<dbReference type="GO" id="GO:0015031">
    <property type="term" value="P:protein transport"/>
    <property type="evidence" value="ECO:0007669"/>
    <property type="project" value="UniProtKB-KW"/>
</dbReference>
<proteinExistence type="uncertain"/>
<gene>
    <name evidence="1" type="primary">TIC214</name>
    <name type="synonym">ycf1</name>
</gene>
<organism>
    <name type="scientific">Marchantia polymorpha</name>
    <name type="common">Common liverwort</name>
    <name type="synonym">Marchantia aquatica</name>
    <dbReference type="NCBI Taxonomy" id="3197"/>
    <lineage>
        <taxon>Eukaryota</taxon>
        <taxon>Viridiplantae</taxon>
        <taxon>Streptophyta</taxon>
        <taxon>Embryophyta</taxon>
        <taxon>Marchantiophyta</taxon>
        <taxon>Marchantiopsida</taxon>
        <taxon>Marchantiidae</taxon>
        <taxon>Marchantiales</taxon>
        <taxon>Marchantiaceae</taxon>
        <taxon>Marchantia</taxon>
    </lineage>
</organism>
<evidence type="ECO:0000250" key="1">
    <source>
        <dbReference type="UniProtKB" id="P56785"/>
    </source>
</evidence>
<evidence type="ECO:0000305" key="2"/>
<comment type="function">
    <text evidence="1">Involved in protein precursor import into chloroplasts. May be part of an intermediate translocation complex acting as a protein-conducting channel at the inner envelope.</text>
</comment>
<comment type="subunit">
    <text evidence="1">Part of the Tic complex.</text>
</comment>
<comment type="subcellular location">
    <subcellularLocation>
        <location evidence="1">Plastid</location>
        <location evidence="1">Chloroplast</location>
    </subcellularLocation>
</comment>
<comment type="similarity">
    <text evidence="2">Belongs to the TIC214 family.</text>
</comment>
<comment type="caution">
    <text evidence="2">Could be the product of a pseudogene. In M.polymorpha this protein is in two parts: ORF 1068 (N-terminal) and ORF 464 (C-terminal). It also could be due to a frameshift error.</text>
</comment>
<protein>
    <recommendedName>
        <fullName evidence="1">Putative protein TIC 214 C-terminal part</fullName>
    </recommendedName>
    <alternativeName>
        <fullName>ORF 464</fullName>
    </alternativeName>
    <alternativeName>
        <fullName evidence="1">Translocon at the inner envelope membrane of chloroplasts 214</fullName>
        <shortName evidence="1">AtTIC214</shortName>
    </alternativeName>
</protein>
<name>T214B_MARPO</name>
<accession>P12223</accession>
<sequence length="464" mass="57166">MILISQAYVFNKIWEIKTKNKSYLKCLLKYWTSHLWIKKNFQSFLSNQGIVGSLELQNFKEENWKEWLKGFNRYNFSSKEWYKITPQQWRNKVSEHWKNQENKKLNPNQQISKNNFFINTSILEQTKKRNKIFKQNLLTYSCFDFTKNLAIRNFLNLNRKKIYNNIIINKIQKSYFIYNKKAKYLDFFSQKQNIFFEYNLLLWLIPEFIEEKNQYQNKRILILKNSIIKENNKKIIQNQKLFRKRELNQSIRQWRWKSKSLEKKFKKLGNMASLMTFMQNQENIISLSSKMREDLKLFHLFFRRNTTINQLTINSEHRLARLLDDQILMYKMVSTFLNIKYRFKRLSNLDNFDDFLGIQFFENKEKNNFFFFNSFNLEDILLPKRRRKFRILNSLTSKNKKNTQLNQKFVQKKFSKTKIKKIKRFIWASYRFEDLACMNRFWFNTINGSRFSMLRFRMYPSLLT</sequence>